<keyword id="KW-0066">ATP synthesis</keyword>
<keyword id="KW-0067">ATP-binding</keyword>
<keyword id="KW-0997">Cell inner membrane</keyword>
<keyword id="KW-1003">Cell membrane</keyword>
<keyword id="KW-0139">CF(1)</keyword>
<keyword id="KW-0375">Hydrogen ion transport</keyword>
<keyword id="KW-0406">Ion transport</keyword>
<keyword id="KW-0472">Membrane</keyword>
<keyword id="KW-0547">Nucleotide-binding</keyword>
<keyword id="KW-1278">Translocase</keyword>
<keyword id="KW-0813">Transport</keyword>
<accession>A6W3S8</accession>
<sequence length="458" mass="50061">MSSGHIVQVIGAVMDVEFPRDSVPKVYDALTIEGKQLVLEVQQQLGDGIVRTIAMGSTDGIKRGLVVENTNKPVSVPVGTKTLGRIMDVLGNPIDEKGPIGEEERWSIHRSAPSYAEQSSSNELLETGIKVIDLVCPFAKGGKVGLFGGAGVGKTVNMMELIRNIAIEHSGYSVFAGVGERTREGNDFYHEMTDSNVIDKVSLVYGQMNEPPGNRLRVALTGLTMAEKFRDEGRDVLFFVDNIYRYTLAGTEVSALLGRMPSAVGYQPTLAEEMGVLQERITSTKTGSITSVQAVYVPADDLTDPSPATTFSHLDATVVLSRDIASLGIYPAIDPLDSTSRQLDPLVIGQEHYDVARGVQMVLQRYKELKDIIAILGMDELSEEDKQTVNRSRKIQRFLSQPFFVAEVFTGSPGKYVSLKDTIRGFKGILDGEFDDLPEQAFYMIGSIDEAVEKAKKL</sequence>
<dbReference type="EC" id="7.1.2.2" evidence="1"/>
<dbReference type="EMBL" id="CP000749">
    <property type="protein sequence ID" value="ABR73357.1"/>
    <property type="molecule type" value="Genomic_DNA"/>
</dbReference>
<dbReference type="SMR" id="A6W3S8"/>
<dbReference type="STRING" id="400668.Mmwyl1_4462"/>
<dbReference type="KEGG" id="mmw:Mmwyl1_4462"/>
<dbReference type="eggNOG" id="COG0055">
    <property type="taxonomic scope" value="Bacteria"/>
</dbReference>
<dbReference type="HOGENOM" id="CLU_022398_0_2_6"/>
<dbReference type="OrthoDB" id="9801639at2"/>
<dbReference type="GO" id="GO:0005886">
    <property type="term" value="C:plasma membrane"/>
    <property type="evidence" value="ECO:0007669"/>
    <property type="project" value="UniProtKB-SubCell"/>
</dbReference>
<dbReference type="GO" id="GO:0045259">
    <property type="term" value="C:proton-transporting ATP synthase complex"/>
    <property type="evidence" value="ECO:0007669"/>
    <property type="project" value="UniProtKB-KW"/>
</dbReference>
<dbReference type="GO" id="GO:0005524">
    <property type="term" value="F:ATP binding"/>
    <property type="evidence" value="ECO:0007669"/>
    <property type="project" value="UniProtKB-UniRule"/>
</dbReference>
<dbReference type="GO" id="GO:0016887">
    <property type="term" value="F:ATP hydrolysis activity"/>
    <property type="evidence" value="ECO:0007669"/>
    <property type="project" value="InterPro"/>
</dbReference>
<dbReference type="GO" id="GO:0046933">
    <property type="term" value="F:proton-transporting ATP synthase activity, rotational mechanism"/>
    <property type="evidence" value="ECO:0007669"/>
    <property type="project" value="UniProtKB-UniRule"/>
</dbReference>
<dbReference type="CDD" id="cd18110">
    <property type="entry name" value="ATP-synt_F1_beta_C"/>
    <property type="match status" value="1"/>
</dbReference>
<dbReference type="CDD" id="cd18115">
    <property type="entry name" value="ATP-synt_F1_beta_N"/>
    <property type="match status" value="1"/>
</dbReference>
<dbReference type="CDD" id="cd01133">
    <property type="entry name" value="F1-ATPase_beta_CD"/>
    <property type="match status" value="1"/>
</dbReference>
<dbReference type="FunFam" id="1.10.1140.10:FF:000001">
    <property type="entry name" value="ATP synthase subunit beta"/>
    <property type="match status" value="1"/>
</dbReference>
<dbReference type="FunFam" id="2.40.10.170:FF:000003">
    <property type="entry name" value="ATP synthase subunit beta"/>
    <property type="match status" value="1"/>
</dbReference>
<dbReference type="FunFam" id="3.40.50.300:FF:000004">
    <property type="entry name" value="ATP synthase subunit beta"/>
    <property type="match status" value="1"/>
</dbReference>
<dbReference type="Gene3D" id="2.40.10.170">
    <property type="match status" value="1"/>
</dbReference>
<dbReference type="Gene3D" id="1.10.1140.10">
    <property type="entry name" value="Bovine Mitochondrial F1-atpase, Atp Synthase Beta Chain, Chain D, domain 3"/>
    <property type="match status" value="1"/>
</dbReference>
<dbReference type="Gene3D" id="3.40.50.300">
    <property type="entry name" value="P-loop containing nucleotide triphosphate hydrolases"/>
    <property type="match status" value="1"/>
</dbReference>
<dbReference type="HAMAP" id="MF_01347">
    <property type="entry name" value="ATP_synth_beta_bact"/>
    <property type="match status" value="1"/>
</dbReference>
<dbReference type="InterPro" id="IPR003593">
    <property type="entry name" value="AAA+_ATPase"/>
</dbReference>
<dbReference type="InterPro" id="IPR055190">
    <property type="entry name" value="ATP-synt_VA_C"/>
</dbReference>
<dbReference type="InterPro" id="IPR005722">
    <property type="entry name" value="ATP_synth_F1_bsu"/>
</dbReference>
<dbReference type="InterPro" id="IPR020003">
    <property type="entry name" value="ATPase_a/bsu_AS"/>
</dbReference>
<dbReference type="InterPro" id="IPR050053">
    <property type="entry name" value="ATPase_alpha/beta_chains"/>
</dbReference>
<dbReference type="InterPro" id="IPR004100">
    <property type="entry name" value="ATPase_F1/V1/A1_a/bsu_N"/>
</dbReference>
<dbReference type="InterPro" id="IPR036121">
    <property type="entry name" value="ATPase_F1/V1/A1_a/bsu_N_sf"/>
</dbReference>
<dbReference type="InterPro" id="IPR000194">
    <property type="entry name" value="ATPase_F1/V1/A1_a/bsu_nucl-bd"/>
</dbReference>
<dbReference type="InterPro" id="IPR024034">
    <property type="entry name" value="ATPase_F1/V1_b/a_C"/>
</dbReference>
<dbReference type="InterPro" id="IPR027417">
    <property type="entry name" value="P-loop_NTPase"/>
</dbReference>
<dbReference type="NCBIfam" id="TIGR01039">
    <property type="entry name" value="atpD"/>
    <property type="match status" value="1"/>
</dbReference>
<dbReference type="PANTHER" id="PTHR15184">
    <property type="entry name" value="ATP SYNTHASE"/>
    <property type="match status" value="1"/>
</dbReference>
<dbReference type="PANTHER" id="PTHR15184:SF71">
    <property type="entry name" value="ATP SYNTHASE SUBUNIT BETA, MITOCHONDRIAL"/>
    <property type="match status" value="1"/>
</dbReference>
<dbReference type="Pfam" id="PF00006">
    <property type="entry name" value="ATP-synt_ab"/>
    <property type="match status" value="1"/>
</dbReference>
<dbReference type="Pfam" id="PF02874">
    <property type="entry name" value="ATP-synt_ab_N"/>
    <property type="match status" value="1"/>
</dbReference>
<dbReference type="Pfam" id="PF22919">
    <property type="entry name" value="ATP-synt_VA_C"/>
    <property type="match status" value="1"/>
</dbReference>
<dbReference type="SMART" id="SM00382">
    <property type="entry name" value="AAA"/>
    <property type="match status" value="1"/>
</dbReference>
<dbReference type="SUPFAM" id="SSF47917">
    <property type="entry name" value="C-terminal domain of alpha and beta subunits of F1 ATP synthase"/>
    <property type="match status" value="1"/>
</dbReference>
<dbReference type="SUPFAM" id="SSF50615">
    <property type="entry name" value="N-terminal domain of alpha and beta subunits of F1 ATP synthase"/>
    <property type="match status" value="1"/>
</dbReference>
<dbReference type="SUPFAM" id="SSF52540">
    <property type="entry name" value="P-loop containing nucleoside triphosphate hydrolases"/>
    <property type="match status" value="1"/>
</dbReference>
<dbReference type="PROSITE" id="PS00152">
    <property type="entry name" value="ATPASE_ALPHA_BETA"/>
    <property type="match status" value="1"/>
</dbReference>
<gene>
    <name evidence="1" type="primary">atpD2</name>
    <name type="ordered locus">Mmwyl1_4462</name>
</gene>
<name>ATPB2_MARMS</name>
<proteinExistence type="inferred from homology"/>
<feature type="chain" id="PRO_0000339543" description="ATP synthase subunit beta 2">
    <location>
        <begin position="1"/>
        <end position="458"/>
    </location>
</feature>
<feature type="binding site" evidence="1">
    <location>
        <begin position="148"/>
        <end position="155"/>
    </location>
    <ligand>
        <name>ATP</name>
        <dbReference type="ChEBI" id="CHEBI:30616"/>
    </ligand>
</feature>
<comment type="function">
    <text evidence="1">Produces ATP from ADP in the presence of a proton gradient across the membrane. The catalytic sites are hosted primarily by the beta subunits.</text>
</comment>
<comment type="catalytic activity">
    <reaction evidence="1">
        <text>ATP + H2O + 4 H(+)(in) = ADP + phosphate + 5 H(+)(out)</text>
        <dbReference type="Rhea" id="RHEA:57720"/>
        <dbReference type="ChEBI" id="CHEBI:15377"/>
        <dbReference type="ChEBI" id="CHEBI:15378"/>
        <dbReference type="ChEBI" id="CHEBI:30616"/>
        <dbReference type="ChEBI" id="CHEBI:43474"/>
        <dbReference type="ChEBI" id="CHEBI:456216"/>
        <dbReference type="EC" id="7.1.2.2"/>
    </reaction>
</comment>
<comment type="subunit">
    <text evidence="1">F-type ATPases have 2 components, CF(1) - the catalytic core - and CF(0) - the membrane proton channel. CF(1) has five subunits: alpha(3), beta(3), gamma(1), delta(1), epsilon(1). CF(0) has three main subunits: a(1), b(2) and c(9-12). The alpha and beta chains form an alternating ring which encloses part of the gamma chain. CF(1) is attached to CF(0) by a central stalk formed by the gamma and epsilon chains, while a peripheral stalk is formed by the delta and b chains.</text>
</comment>
<comment type="subcellular location">
    <subcellularLocation>
        <location evidence="1">Cell inner membrane</location>
        <topology evidence="1">Peripheral membrane protein</topology>
    </subcellularLocation>
</comment>
<comment type="similarity">
    <text evidence="1">Belongs to the ATPase alpha/beta chains family.</text>
</comment>
<evidence type="ECO:0000255" key="1">
    <source>
        <dbReference type="HAMAP-Rule" id="MF_01347"/>
    </source>
</evidence>
<organism>
    <name type="scientific">Marinomonas sp. (strain MWYL1)</name>
    <dbReference type="NCBI Taxonomy" id="400668"/>
    <lineage>
        <taxon>Bacteria</taxon>
        <taxon>Pseudomonadati</taxon>
        <taxon>Pseudomonadota</taxon>
        <taxon>Gammaproteobacteria</taxon>
        <taxon>Oceanospirillales</taxon>
        <taxon>Oceanospirillaceae</taxon>
        <taxon>Marinomonas</taxon>
    </lineage>
</organism>
<reference key="1">
    <citation type="submission" date="2007-06" db="EMBL/GenBank/DDBJ databases">
        <title>Complete sequence of Marinomonas sp. MWYL1.</title>
        <authorList>
            <consortium name="US DOE Joint Genome Institute"/>
            <person name="Copeland A."/>
            <person name="Lucas S."/>
            <person name="Lapidus A."/>
            <person name="Barry K."/>
            <person name="Glavina del Rio T."/>
            <person name="Dalin E."/>
            <person name="Tice H."/>
            <person name="Pitluck S."/>
            <person name="Kiss H."/>
            <person name="Brettin T."/>
            <person name="Bruce D."/>
            <person name="Detter J.C."/>
            <person name="Han C."/>
            <person name="Schmutz J."/>
            <person name="Larimer F."/>
            <person name="Land M."/>
            <person name="Hauser L."/>
            <person name="Kyrpides N."/>
            <person name="Kim E."/>
            <person name="Johnston A.W.B."/>
            <person name="Todd J.D."/>
            <person name="Rogers R."/>
            <person name="Wexler M."/>
            <person name="Bond P.L."/>
            <person name="Li Y."/>
            <person name="Richardson P."/>
        </authorList>
    </citation>
    <scope>NUCLEOTIDE SEQUENCE [LARGE SCALE GENOMIC DNA]</scope>
    <source>
        <strain>MWYL1</strain>
    </source>
</reference>
<protein>
    <recommendedName>
        <fullName evidence="1">ATP synthase subunit beta 2</fullName>
        <ecNumber evidence="1">7.1.2.2</ecNumber>
    </recommendedName>
    <alternativeName>
        <fullName evidence="1">ATP synthase F1 sector subunit beta 2</fullName>
    </alternativeName>
    <alternativeName>
        <fullName evidence="1">F-ATPase subunit beta 2</fullName>
    </alternativeName>
</protein>